<name>ATLA3_RAT</name>
<organism>
    <name type="scientific">Rattus norvegicus</name>
    <name type="common">Rat</name>
    <dbReference type="NCBI Taxonomy" id="10116"/>
    <lineage>
        <taxon>Eukaryota</taxon>
        <taxon>Metazoa</taxon>
        <taxon>Chordata</taxon>
        <taxon>Craniata</taxon>
        <taxon>Vertebrata</taxon>
        <taxon>Euteleostomi</taxon>
        <taxon>Mammalia</taxon>
        <taxon>Eutheria</taxon>
        <taxon>Euarchontoglires</taxon>
        <taxon>Glires</taxon>
        <taxon>Rodentia</taxon>
        <taxon>Myomorpha</taxon>
        <taxon>Muroidea</taxon>
        <taxon>Muridae</taxon>
        <taxon>Murinae</taxon>
        <taxon>Rattus</taxon>
    </lineage>
</organism>
<accession>Q0ZHH6</accession>
<proteinExistence type="evidence at transcript level"/>
<protein>
    <recommendedName>
        <fullName evidence="6">Atlastin-3</fullName>
        <ecNumber evidence="1">3.6.5.-</ecNumber>
    </recommendedName>
</protein>
<dbReference type="EC" id="3.6.5.-" evidence="1"/>
<dbReference type="EMBL" id="DQ450893">
    <property type="protein sequence ID" value="ABE26990.1"/>
    <property type="molecule type" value="mRNA"/>
</dbReference>
<dbReference type="EMBL" id="AABR03000230">
    <property type="status" value="NOT_ANNOTATED_CDS"/>
    <property type="molecule type" value="Genomic_DNA"/>
</dbReference>
<dbReference type="RefSeq" id="NP_001037706.1">
    <property type="nucleotide sequence ID" value="NM_001044241.1"/>
</dbReference>
<dbReference type="SMR" id="Q0ZHH6"/>
<dbReference type="FunCoup" id="Q0ZHH6">
    <property type="interactions" value="2247"/>
</dbReference>
<dbReference type="STRING" id="10116.ENSRNOP00000028787"/>
<dbReference type="iPTMnet" id="Q0ZHH6"/>
<dbReference type="PhosphoSitePlus" id="Q0ZHH6"/>
<dbReference type="jPOST" id="Q0ZHH6"/>
<dbReference type="PaxDb" id="10116-ENSRNOP00000063444"/>
<dbReference type="GeneID" id="309187"/>
<dbReference type="KEGG" id="rno:309187"/>
<dbReference type="UCSC" id="RGD:1309871">
    <molecule id="Q0ZHH6-1"/>
    <property type="organism name" value="rat"/>
</dbReference>
<dbReference type="AGR" id="RGD:1309871"/>
<dbReference type="CTD" id="25923"/>
<dbReference type="RGD" id="1309871">
    <property type="gene designation" value="Atl3"/>
</dbReference>
<dbReference type="eggNOG" id="KOG2037">
    <property type="taxonomic scope" value="Eukaryota"/>
</dbReference>
<dbReference type="InParanoid" id="Q0ZHH6"/>
<dbReference type="PhylomeDB" id="Q0ZHH6"/>
<dbReference type="TreeFam" id="TF105251"/>
<dbReference type="PRO" id="PR:Q0ZHH6"/>
<dbReference type="Proteomes" id="UP000002494">
    <property type="component" value="Unplaced"/>
</dbReference>
<dbReference type="GO" id="GO:0071782">
    <property type="term" value="C:endoplasmic reticulum tubular network"/>
    <property type="evidence" value="ECO:0000266"/>
    <property type="project" value="RGD"/>
</dbReference>
<dbReference type="GO" id="GO:0098826">
    <property type="term" value="C:endoplasmic reticulum tubular network membrane"/>
    <property type="evidence" value="ECO:0000250"/>
    <property type="project" value="UniProtKB"/>
</dbReference>
<dbReference type="GO" id="GO:0016020">
    <property type="term" value="C:membrane"/>
    <property type="evidence" value="ECO:0000266"/>
    <property type="project" value="RGD"/>
</dbReference>
<dbReference type="GO" id="GO:0005525">
    <property type="term" value="F:GTP binding"/>
    <property type="evidence" value="ECO:0000318"/>
    <property type="project" value="GO_Central"/>
</dbReference>
<dbReference type="GO" id="GO:0003924">
    <property type="term" value="F:GTPase activity"/>
    <property type="evidence" value="ECO:0000318"/>
    <property type="project" value="GO_Central"/>
</dbReference>
<dbReference type="GO" id="GO:0140523">
    <property type="term" value="F:GTPase-dependent fusogenic activity"/>
    <property type="evidence" value="ECO:0000250"/>
    <property type="project" value="UniProtKB"/>
</dbReference>
<dbReference type="GO" id="GO:0042802">
    <property type="term" value="F:identical protein binding"/>
    <property type="evidence" value="ECO:0000250"/>
    <property type="project" value="UniProtKB"/>
</dbReference>
<dbReference type="GO" id="GO:0016320">
    <property type="term" value="P:endoplasmic reticulum membrane fusion"/>
    <property type="evidence" value="ECO:0000250"/>
    <property type="project" value="UniProtKB"/>
</dbReference>
<dbReference type="GO" id="GO:0007029">
    <property type="term" value="P:endoplasmic reticulum organization"/>
    <property type="evidence" value="ECO:0000266"/>
    <property type="project" value="RGD"/>
</dbReference>
<dbReference type="GO" id="GO:1990809">
    <property type="term" value="P:endoplasmic reticulum tubular network membrane organization"/>
    <property type="evidence" value="ECO:0000250"/>
    <property type="project" value="UniProtKB"/>
</dbReference>
<dbReference type="GO" id="GO:0007030">
    <property type="term" value="P:Golgi organization"/>
    <property type="evidence" value="ECO:0000266"/>
    <property type="project" value="RGD"/>
</dbReference>
<dbReference type="GO" id="GO:1903373">
    <property type="term" value="P:positive regulation of endoplasmic reticulum tubular network organization"/>
    <property type="evidence" value="ECO:0000266"/>
    <property type="project" value="RGD"/>
</dbReference>
<dbReference type="GO" id="GO:0051260">
    <property type="term" value="P:protein homooligomerization"/>
    <property type="evidence" value="ECO:0000266"/>
    <property type="project" value="RGD"/>
</dbReference>
<dbReference type="CDD" id="cd01851">
    <property type="entry name" value="GBP"/>
    <property type="match status" value="1"/>
</dbReference>
<dbReference type="FunFam" id="1.20.58.420:FF:000001">
    <property type="entry name" value="Atlastin-1 isoform 1"/>
    <property type="match status" value="1"/>
</dbReference>
<dbReference type="FunFam" id="3.40.50.300:FF:000314">
    <property type="entry name" value="Atlastin-2 isoform 2"/>
    <property type="match status" value="1"/>
</dbReference>
<dbReference type="Gene3D" id="1.20.58.420">
    <property type="entry name" value="AHSP"/>
    <property type="match status" value="1"/>
</dbReference>
<dbReference type="Gene3D" id="3.40.50.300">
    <property type="entry name" value="P-loop containing nucleotide triphosphate hydrolases"/>
    <property type="match status" value="1"/>
</dbReference>
<dbReference type="InterPro" id="IPR030386">
    <property type="entry name" value="G_GB1_RHD3_dom"/>
</dbReference>
<dbReference type="InterPro" id="IPR036543">
    <property type="entry name" value="Guanylate-bd_C_sf"/>
</dbReference>
<dbReference type="InterPro" id="IPR015894">
    <property type="entry name" value="Guanylate-bd_N"/>
</dbReference>
<dbReference type="InterPro" id="IPR027417">
    <property type="entry name" value="P-loop_NTPase"/>
</dbReference>
<dbReference type="PANTHER" id="PTHR10751">
    <property type="entry name" value="GUANYLATE BINDING PROTEIN"/>
    <property type="match status" value="1"/>
</dbReference>
<dbReference type="Pfam" id="PF02263">
    <property type="entry name" value="GBP"/>
    <property type="match status" value="1"/>
</dbReference>
<dbReference type="SUPFAM" id="SSF48340">
    <property type="entry name" value="Interferon-induced guanylate-binding protein 1 (GBP1), C-terminal domain"/>
    <property type="match status" value="1"/>
</dbReference>
<dbReference type="SUPFAM" id="SSF52540">
    <property type="entry name" value="P-loop containing nucleoside triphosphate hydrolases"/>
    <property type="match status" value="1"/>
</dbReference>
<dbReference type="PROSITE" id="PS51715">
    <property type="entry name" value="G_GB1_RHD3"/>
    <property type="match status" value="1"/>
</dbReference>
<evidence type="ECO:0000250" key="1">
    <source>
        <dbReference type="UniProtKB" id="Q6DD88"/>
    </source>
</evidence>
<evidence type="ECO:0000250" key="2">
    <source>
        <dbReference type="UniProtKB" id="Q8WXF7"/>
    </source>
</evidence>
<evidence type="ECO:0000255" key="3"/>
<evidence type="ECO:0000255" key="4">
    <source>
        <dbReference type="PROSITE-ProRule" id="PRU01052"/>
    </source>
</evidence>
<evidence type="ECO:0000256" key="5">
    <source>
        <dbReference type="SAM" id="MobiDB-lite"/>
    </source>
</evidence>
<evidence type="ECO:0000303" key="6">
    <source>
    </source>
</evidence>
<evidence type="ECO:0000305" key="7"/>
<evidence type="ECO:0000312" key="8">
    <source>
        <dbReference type="RGD" id="1309871"/>
    </source>
</evidence>
<sequence length="541" mass="60586">MLSPQRTAAVASRGAGDAMENGKPGPVQVVLVHKEQHSFELEERALASVLLQDHIRDLDVVVVSVAGAFRKGKSFILDFMLRYLYSQKEHGHSNWLGDPEEPLTGFSWRGGSDPETTGIQIWSEVFTVKKPCGKEVAVVLMDTQGAFDSQSTVKDCATIFALSTMTSSVQIYNLSQNIQEDDLQQLQLFTEYGRLAMDEIFQKPFQTLMFLVRDWSFPYEYNYGLQGGMSFLDKRLQVKEHQHEEIQNVRNHIHSCFSDVTCFLLPHPGLQVATSPDFDGKLKEYIASEFKEQLQTLIPYVLNPSKLMEKEINGSKVTCRGLLEYFKAYIKIYQGEDLPHPKSMLQATAANNLAAAASAKDIYYSSMEEICGGEKPYLSPDILEEKHQEFKQLALDHFKKTKKMGGKDFSFRYQQELEEEITELYENFCKHNGSKNVFSTFRTPAVLFTGIAVLYIASGLTGFIGLEVVAQLFNCMVGLLLIALLTWGYIRYSGQYLELGGAIDSGAAYVLEQASSHIGNSTQAAVRDAIAGRPPADKKSQ</sequence>
<keyword id="KW-0007">Acetylation</keyword>
<keyword id="KW-0025">Alternative splicing</keyword>
<keyword id="KW-0256">Endoplasmic reticulum</keyword>
<keyword id="KW-0342">GTP-binding</keyword>
<keyword id="KW-0378">Hydrolase</keyword>
<keyword id="KW-0460">Magnesium</keyword>
<keyword id="KW-0472">Membrane</keyword>
<keyword id="KW-0479">Metal-binding</keyword>
<keyword id="KW-0547">Nucleotide-binding</keyword>
<keyword id="KW-1185">Reference proteome</keyword>
<keyword id="KW-0812">Transmembrane</keyword>
<keyword id="KW-1133">Transmembrane helix</keyword>
<gene>
    <name evidence="6 8" type="primary">Atl3</name>
</gene>
<comment type="function">
    <text evidence="1 2">Atlastin-3 (ATL3) is a membrane-anchored GTPase that mediates the GTP-dependent fusion of endoplasmic reticulum (ER) membranes, maintaining the continuous ER network. It facilitates the formation of three-way junctions where ER tubules intersect (By similarity). Two atlastin-3 on neighboring ER tubules bind GTP and form loose homodimers through the GB1/RHD3-type G domains and 3HB regions. Upon GTP hydrolysis, the 3HB regions tighten, pulling the membranes together to drive their fusion. After fusion, the homodimer disassembles upon release of inorganic phosphate (Pi). Subsequently, GDP dissociates, resetting the monomers to a conformation ready for a new fusion cycle (By similarity).</text>
</comment>
<comment type="catalytic activity">
    <reaction evidence="1">
        <text>GTP + H2O = GDP + phosphate + H(+)</text>
        <dbReference type="Rhea" id="RHEA:19669"/>
        <dbReference type="ChEBI" id="CHEBI:15377"/>
        <dbReference type="ChEBI" id="CHEBI:15378"/>
        <dbReference type="ChEBI" id="CHEBI:37565"/>
        <dbReference type="ChEBI" id="CHEBI:43474"/>
        <dbReference type="ChEBI" id="CHEBI:58189"/>
    </reaction>
    <physiologicalReaction direction="left-to-right" evidence="1">
        <dbReference type="Rhea" id="RHEA:19670"/>
    </physiologicalReaction>
</comment>
<comment type="subunit">
    <text evidence="1">Monomeric and homodimeric. The homodimer, transiently formed by two molecules on opposing membranes, is the active form mediating ER membrane fusion. Interacts with ZFYVE27; both proteins are involved in endoplasmic reticulum tubular network organization. Interacts with REEP5; both proteins are involved in endoplasmic reticulum tubular network organization.</text>
</comment>
<comment type="subcellular location">
    <subcellularLocation>
        <location evidence="1">Endoplasmic reticulum membrane</location>
        <topology evidence="1">Multi-pass membrane protein</topology>
    </subcellularLocation>
    <text evidence="1">Localizes to endoplasmic reticulum tubules and accumulates in punctuate structures corresponding to 3-way junctions, which represent crossing-points at which the tubules build a polygonal network.</text>
</comment>
<comment type="alternative products">
    <event type="alternative splicing"/>
    <isoform>
        <id>Q0ZHH6-1</id>
        <name>1</name>
        <sequence type="displayed"/>
    </isoform>
    <isoform>
        <id>Q0ZHH6-2</id>
        <name>2</name>
        <sequence type="described" ref="VSP_025315"/>
    </isoform>
</comment>
<comment type="domain">
    <text evidence="1">The GB1/RHD3-type G domain mediates GTP-binding and hydrolysis as well as homodimerization.</text>
</comment>
<comment type="domain">
    <text evidence="2">The two three-helix bundle (3HB) regions in the homodimer are loosely associated initially, but they tighten upon GTP hydrolysis, facilitating the fusion of membranes.</text>
</comment>
<comment type="similarity">
    <text evidence="4">Belongs to the TRAFAC class dynamin-like GTPase superfamily. GB1/RHD3 GTPase family. GB1 subfamily.</text>
</comment>
<feature type="chain" id="PRO_0000287111" description="Atlastin-3">
    <location>
        <begin position="1"/>
        <end position="541"/>
    </location>
</feature>
<feature type="topological domain" description="Cytoplasmic" evidence="1">
    <location>
        <begin position="1"/>
        <end position="445"/>
    </location>
</feature>
<feature type="transmembrane region" description="Helical" evidence="3">
    <location>
        <begin position="446"/>
        <end position="466"/>
    </location>
</feature>
<feature type="topological domain" description="Lumenal" evidence="1">
    <location>
        <position position="467"/>
    </location>
</feature>
<feature type="transmembrane region" description="Helical" evidence="3">
    <location>
        <begin position="468"/>
        <end position="488"/>
    </location>
</feature>
<feature type="topological domain" description="Cytoplasmic" evidence="1">
    <location>
        <begin position="489"/>
        <end position="541"/>
    </location>
</feature>
<feature type="domain" description="GB1/RHD3-type G" evidence="4">
    <location>
        <begin position="57"/>
        <end position="306"/>
    </location>
</feature>
<feature type="region of interest" description="N-terminal hypervariable region (HVR)" evidence="1">
    <location>
        <begin position="1"/>
        <end position="25"/>
    </location>
</feature>
<feature type="region of interest" description="Disordered" evidence="5">
    <location>
        <begin position="1"/>
        <end position="22"/>
    </location>
</feature>
<feature type="region of interest" description="3HB (three-helix bundle) domain" evidence="2">
    <location>
        <begin position="344"/>
        <end position="434"/>
    </location>
</feature>
<feature type="binding site" evidence="1">
    <location>
        <position position="70"/>
    </location>
    <ligand>
        <name>GDP</name>
        <dbReference type="ChEBI" id="CHEBI:58189"/>
    </ligand>
</feature>
<feature type="binding site" evidence="1">
    <location>
        <position position="71"/>
    </location>
    <ligand>
        <name>GDP</name>
        <dbReference type="ChEBI" id="CHEBI:58189"/>
    </ligand>
</feature>
<feature type="binding site" evidence="1">
    <location>
        <position position="72"/>
    </location>
    <ligand>
        <name>GDP</name>
        <dbReference type="ChEBI" id="CHEBI:58189"/>
    </ligand>
</feature>
<feature type="binding site" evidence="1">
    <location>
        <position position="73"/>
    </location>
    <ligand>
        <name>GDP</name>
        <dbReference type="ChEBI" id="CHEBI:58189"/>
    </ligand>
</feature>
<feature type="binding site" evidence="1">
    <location>
        <position position="74"/>
    </location>
    <ligand>
        <name>GDP</name>
        <dbReference type="ChEBI" id="CHEBI:58189"/>
    </ligand>
</feature>
<feature type="binding site" evidence="1">
    <location>
        <position position="75"/>
    </location>
    <ligand>
        <name>GDP</name>
        <dbReference type="ChEBI" id="CHEBI:58189"/>
    </ligand>
</feature>
<feature type="binding site" evidence="1">
    <location>
        <position position="109"/>
    </location>
    <ligand>
        <name>GDP</name>
        <dbReference type="ChEBI" id="CHEBI:58189"/>
    </ligand>
</feature>
<feature type="binding site" evidence="1">
    <location>
        <position position="142"/>
    </location>
    <ligand>
        <name>Mg(2+)</name>
        <dbReference type="ChEBI" id="CHEBI:18420"/>
    </ligand>
</feature>
<feature type="binding site" evidence="1">
    <location>
        <position position="213"/>
    </location>
    <ligand>
        <name>GDP</name>
        <dbReference type="ChEBI" id="CHEBI:58189"/>
    </ligand>
</feature>
<feature type="binding site" evidence="1">
    <location>
        <position position="214"/>
    </location>
    <ligand>
        <name>GDP</name>
        <dbReference type="ChEBI" id="CHEBI:58189"/>
    </ligand>
</feature>
<feature type="binding site" evidence="1">
    <location>
        <position position="272"/>
    </location>
    <ligand>
        <name>GDP</name>
        <dbReference type="ChEBI" id="CHEBI:58189"/>
    </ligand>
</feature>
<feature type="binding site" evidence="1">
    <location>
        <position position="275"/>
    </location>
    <ligand>
        <name>GDP</name>
        <dbReference type="ChEBI" id="CHEBI:58189"/>
    </ligand>
</feature>
<feature type="modified residue" description="N6-acetyllysine" evidence="1">
    <location>
        <position position="391"/>
    </location>
</feature>
<feature type="splice variant" id="VSP_025315" description="In isoform 2." evidence="6">
    <original>MLSPQRTAAVASRGA</original>
    <variation>MDPRFQYAVT</variation>
    <location>
        <begin position="1"/>
        <end position="15"/>
    </location>
</feature>
<feature type="sequence conflict" description="In Ref. 1; ABE26990." evidence="7" ref="1">
    <original>EY</original>
    <variation>D</variation>
    <location>
        <begin position="284"/>
        <end position="285"/>
    </location>
</feature>
<feature type="sequence conflict" description="In Ref. 1; ABE26990." evidence="7" ref="1">
    <original>A</original>
    <variation>AE</variation>
    <location>
        <position position="349"/>
    </location>
</feature>
<reference key="1">
    <citation type="journal article" date="2003" name="J. Biol. Chem.">
        <title>Cellular localization, oligomerization, and membrane association of the hereditary spastic paraplegia 3A (SPG3A) protein atlastin.</title>
        <authorList>
            <person name="Zhu P.-P."/>
            <person name="Patterson A."/>
            <person name="Lavoie B."/>
            <person name="Stadler J."/>
            <person name="Shoeb M."/>
            <person name="Patel R."/>
            <person name="Blackstone C."/>
        </authorList>
    </citation>
    <scope>NUCLEOTIDE SEQUENCE [MRNA] (ISOFORM 2)</scope>
    <source>
        <tissue>Testis</tissue>
    </source>
</reference>
<reference key="2">
    <citation type="journal article" date="2004" name="Nature">
        <title>Genome sequence of the Brown Norway rat yields insights into mammalian evolution.</title>
        <authorList>
            <person name="Gibbs R.A."/>
            <person name="Weinstock G.M."/>
            <person name="Metzker M.L."/>
            <person name="Muzny D.M."/>
            <person name="Sodergren E.J."/>
            <person name="Scherer S."/>
            <person name="Scott G."/>
            <person name="Steffen D."/>
            <person name="Worley K.C."/>
            <person name="Burch P.E."/>
            <person name="Okwuonu G."/>
            <person name="Hines S."/>
            <person name="Lewis L."/>
            <person name="Deramo C."/>
            <person name="Delgado O."/>
            <person name="Dugan-Rocha S."/>
            <person name="Miner G."/>
            <person name="Morgan M."/>
            <person name="Hawes A."/>
            <person name="Gill R."/>
            <person name="Holt R.A."/>
            <person name="Adams M.D."/>
            <person name="Amanatides P.G."/>
            <person name="Baden-Tillson H."/>
            <person name="Barnstead M."/>
            <person name="Chin S."/>
            <person name="Evans C.A."/>
            <person name="Ferriera S."/>
            <person name="Fosler C."/>
            <person name="Glodek A."/>
            <person name="Gu Z."/>
            <person name="Jennings D."/>
            <person name="Kraft C.L."/>
            <person name="Nguyen T."/>
            <person name="Pfannkoch C.M."/>
            <person name="Sitter C."/>
            <person name="Sutton G.G."/>
            <person name="Venter J.C."/>
            <person name="Woodage T."/>
            <person name="Smith D."/>
            <person name="Lee H.-M."/>
            <person name="Gustafson E."/>
            <person name="Cahill P."/>
            <person name="Kana A."/>
            <person name="Doucette-Stamm L."/>
            <person name="Weinstock K."/>
            <person name="Fechtel K."/>
            <person name="Weiss R.B."/>
            <person name="Dunn D.M."/>
            <person name="Green E.D."/>
            <person name="Blakesley R.W."/>
            <person name="Bouffard G.G."/>
            <person name="De Jong P.J."/>
            <person name="Osoegawa K."/>
            <person name="Zhu B."/>
            <person name="Marra M."/>
            <person name="Schein J."/>
            <person name="Bosdet I."/>
            <person name="Fjell C."/>
            <person name="Jones S."/>
            <person name="Krzywinski M."/>
            <person name="Mathewson C."/>
            <person name="Siddiqui A."/>
            <person name="Wye N."/>
            <person name="McPherson J."/>
            <person name="Zhao S."/>
            <person name="Fraser C.M."/>
            <person name="Shetty J."/>
            <person name="Shatsman S."/>
            <person name="Geer K."/>
            <person name="Chen Y."/>
            <person name="Abramzon S."/>
            <person name="Nierman W.C."/>
            <person name="Havlak P.H."/>
            <person name="Chen R."/>
            <person name="Durbin K.J."/>
            <person name="Egan A."/>
            <person name="Ren Y."/>
            <person name="Song X.-Z."/>
            <person name="Li B."/>
            <person name="Liu Y."/>
            <person name="Qin X."/>
            <person name="Cawley S."/>
            <person name="Cooney A.J."/>
            <person name="D'Souza L.M."/>
            <person name="Martin K."/>
            <person name="Wu J.Q."/>
            <person name="Gonzalez-Garay M.L."/>
            <person name="Jackson A.R."/>
            <person name="Kalafus K.J."/>
            <person name="McLeod M.P."/>
            <person name="Milosavljevic A."/>
            <person name="Virk D."/>
            <person name="Volkov A."/>
            <person name="Wheeler D.A."/>
            <person name="Zhang Z."/>
            <person name="Bailey J.A."/>
            <person name="Eichler E.E."/>
            <person name="Tuzun E."/>
            <person name="Birney E."/>
            <person name="Mongin E."/>
            <person name="Ureta-Vidal A."/>
            <person name="Woodwark C."/>
            <person name="Zdobnov E."/>
            <person name="Bork P."/>
            <person name="Suyama M."/>
            <person name="Torrents D."/>
            <person name="Alexandersson M."/>
            <person name="Trask B.J."/>
            <person name="Young J.M."/>
            <person name="Huang H."/>
            <person name="Wang H."/>
            <person name="Xing H."/>
            <person name="Daniels S."/>
            <person name="Gietzen D."/>
            <person name="Schmidt J."/>
            <person name="Stevens K."/>
            <person name="Vitt U."/>
            <person name="Wingrove J."/>
            <person name="Camara F."/>
            <person name="Mar Alba M."/>
            <person name="Abril J.F."/>
            <person name="Guigo R."/>
            <person name="Smit A."/>
            <person name="Dubchak I."/>
            <person name="Rubin E.M."/>
            <person name="Couronne O."/>
            <person name="Poliakov A."/>
            <person name="Huebner N."/>
            <person name="Ganten D."/>
            <person name="Goesele C."/>
            <person name="Hummel O."/>
            <person name="Kreitler T."/>
            <person name="Lee Y.-A."/>
            <person name="Monti J."/>
            <person name="Schulz H."/>
            <person name="Zimdahl H."/>
            <person name="Himmelbauer H."/>
            <person name="Lehrach H."/>
            <person name="Jacob H.J."/>
            <person name="Bromberg S."/>
            <person name="Gullings-Handley J."/>
            <person name="Jensen-Seaman M.I."/>
            <person name="Kwitek A.E."/>
            <person name="Lazar J."/>
            <person name="Pasko D."/>
            <person name="Tonellato P.J."/>
            <person name="Twigger S."/>
            <person name="Ponting C.P."/>
            <person name="Duarte J.M."/>
            <person name="Rice S."/>
            <person name="Goodstadt L."/>
            <person name="Beatson S.A."/>
            <person name="Emes R.D."/>
            <person name="Winter E.E."/>
            <person name="Webber C."/>
            <person name="Brandt P."/>
            <person name="Nyakatura G."/>
            <person name="Adetobi M."/>
            <person name="Chiaromonte F."/>
            <person name="Elnitski L."/>
            <person name="Eswara P."/>
            <person name="Hardison R.C."/>
            <person name="Hou M."/>
            <person name="Kolbe D."/>
            <person name="Makova K."/>
            <person name="Miller W."/>
            <person name="Nekrutenko A."/>
            <person name="Riemer C."/>
            <person name="Schwartz S."/>
            <person name="Taylor J."/>
            <person name="Yang S."/>
            <person name="Zhang Y."/>
            <person name="Lindpaintner K."/>
            <person name="Andrews T.D."/>
            <person name="Caccamo M."/>
            <person name="Clamp M."/>
            <person name="Clarke L."/>
            <person name="Curwen V."/>
            <person name="Durbin R.M."/>
            <person name="Eyras E."/>
            <person name="Searle S.M."/>
            <person name="Cooper G.M."/>
            <person name="Batzoglou S."/>
            <person name="Brudno M."/>
            <person name="Sidow A."/>
            <person name="Stone E.A."/>
            <person name="Payseur B.A."/>
            <person name="Bourque G."/>
            <person name="Lopez-Otin C."/>
            <person name="Puente X.S."/>
            <person name="Chakrabarti K."/>
            <person name="Chatterji S."/>
            <person name="Dewey C."/>
            <person name="Pachter L."/>
            <person name="Bray N."/>
            <person name="Yap V.B."/>
            <person name="Caspi A."/>
            <person name="Tesler G."/>
            <person name="Pevzner P.A."/>
            <person name="Haussler D."/>
            <person name="Roskin K.M."/>
            <person name="Baertsch R."/>
            <person name="Clawson H."/>
            <person name="Furey T.S."/>
            <person name="Hinrichs A.S."/>
            <person name="Karolchik D."/>
            <person name="Kent W.J."/>
            <person name="Rosenbloom K.R."/>
            <person name="Trumbower H."/>
            <person name="Weirauch M."/>
            <person name="Cooper D.N."/>
            <person name="Stenson P.D."/>
            <person name="Ma B."/>
            <person name="Brent M."/>
            <person name="Arumugam M."/>
            <person name="Shteynberg D."/>
            <person name="Copley R.R."/>
            <person name="Taylor M.S."/>
            <person name="Riethman H."/>
            <person name="Mudunuri U."/>
            <person name="Peterson J."/>
            <person name="Guyer M."/>
            <person name="Felsenfeld A."/>
            <person name="Old S."/>
            <person name="Mockrin S."/>
            <person name="Collins F.S."/>
        </authorList>
    </citation>
    <scope>NUCLEOTIDE SEQUENCE [LARGE SCALE GENOMIC DNA]</scope>
    <source>
        <strain>Brown Norway</strain>
    </source>
</reference>